<dbReference type="EC" id="6.1.1.20" evidence="1"/>
<dbReference type="EMBL" id="L77117">
    <property type="protein sequence ID" value="AAB99110.1"/>
    <property type="molecule type" value="Genomic_DNA"/>
</dbReference>
<dbReference type="PIR" id="C64438">
    <property type="entry name" value="C64438"/>
</dbReference>
<dbReference type="RefSeq" id="WP_010870620.1">
    <property type="nucleotide sequence ID" value="NC_000909.1"/>
</dbReference>
<dbReference type="SMR" id="Q58508"/>
<dbReference type="FunCoup" id="Q58508">
    <property type="interactions" value="257"/>
</dbReference>
<dbReference type="STRING" id="243232.MJ_1108"/>
<dbReference type="PaxDb" id="243232-MJ_1108"/>
<dbReference type="EnsemblBacteria" id="AAB99110">
    <property type="protein sequence ID" value="AAB99110"/>
    <property type="gene ID" value="MJ_1108"/>
</dbReference>
<dbReference type="GeneID" id="1452005"/>
<dbReference type="KEGG" id="mja:MJ_1108"/>
<dbReference type="eggNOG" id="arCOG00412">
    <property type="taxonomic scope" value="Archaea"/>
</dbReference>
<dbReference type="HOGENOM" id="CLU_020279_3_0_2"/>
<dbReference type="InParanoid" id="Q58508"/>
<dbReference type="OrthoDB" id="10073at2157"/>
<dbReference type="PhylomeDB" id="Q58508"/>
<dbReference type="Proteomes" id="UP000000805">
    <property type="component" value="Chromosome"/>
</dbReference>
<dbReference type="GO" id="GO:0009328">
    <property type="term" value="C:phenylalanine-tRNA ligase complex"/>
    <property type="evidence" value="ECO:0000318"/>
    <property type="project" value="GO_Central"/>
</dbReference>
<dbReference type="GO" id="GO:0005524">
    <property type="term" value="F:ATP binding"/>
    <property type="evidence" value="ECO:0007669"/>
    <property type="project" value="UniProtKB-UniRule"/>
</dbReference>
<dbReference type="GO" id="GO:0000287">
    <property type="term" value="F:magnesium ion binding"/>
    <property type="evidence" value="ECO:0007669"/>
    <property type="project" value="InterPro"/>
</dbReference>
<dbReference type="GO" id="GO:0004826">
    <property type="term" value="F:phenylalanine-tRNA ligase activity"/>
    <property type="evidence" value="ECO:0007669"/>
    <property type="project" value="UniProtKB-UniRule"/>
</dbReference>
<dbReference type="GO" id="GO:0003723">
    <property type="term" value="F:RNA binding"/>
    <property type="evidence" value="ECO:0007669"/>
    <property type="project" value="InterPro"/>
</dbReference>
<dbReference type="GO" id="GO:0006432">
    <property type="term" value="P:phenylalanyl-tRNA aminoacylation"/>
    <property type="evidence" value="ECO:0000318"/>
    <property type="project" value="GO_Central"/>
</dbReference>
<dbReference type="CDD" id="cd00769">
    <property type="entry name" value="PheRS_beta_core"/>
    <property type="match status" value="1"/>
</dbReference>
<dbReference type="FunFam" id="3.30.56.10:FF:000011">
    <property type="entry name" value="Phenylalanine--tRNA ligase beta subunit"/>
    <property type="match status" value="1"/>
</dbReference>
<dbReference type="FunFam" id="3.30.56.10:FF:000014">
    <property type="entry name" value="Phenylalanine--tRNA ligase beta subunit"/>
    <property type="match status" value="1"/>
</dbReference>
<dbReference type="FunFam" id="3.30.930.10:FF:000132">
    <property type="entry name" value="Phenylalanine--tRNA ligase beta subunit"/>
    <property type="match status" value="1"/>
</dbReference>
<dbReference type="FunFam" id="3.50.40.10:FF:000003">
    <property type="entry name" value="Phenylalanine--tRNA ligase beta subunit"/>
    <property type="match status" value="1"/>
</dbReference>
<dbReference type="Gene3D" id="3.30.56.10">
    <property type="match status" value="2"/>
</dbReference>
<dbReference type="Gene3D" id="3.30.930.10">
    <property type="entry name" value="Bira Bifunctional Protein, Domain 2"/>
    <property type="match status" value="1"/>
</dbReference>
<dbReference type="Gene3D" id="3.50.40.10">
    <property type="entry name" value="Phenylalanyl-trna Synthetase, Chain B, domain 3"/>
    <property type="match status" value="1"/>
</dbReference>
<dbReference type="HAMAP" id="MF_00284">
    <property type="entry name" value="Phe_tRNA_synth_beta2"/>
    <property type="match status" value="1"/>
</dbReference>
<dbReference type="InterPro" id="IPR045864">
    <property type="entry name" value="aa-tRNA-synth_II/BPL/LPL"/>
</dbReference>
<dbReference type="InterPro" id="IPR005146">
    <property type="entry name" value="B3/B4_tRNA-bd"/>
</dbReference>
<dbReference type="InterPro" id="IPR009061">
    <property type="entry name" value="DNA-bd_dom_put_sf"/>
</dbReference>
<dbReference type="InterPro" id="IPR045060">
    <property type="entry name" value="Phe-tRNA-ligase_IIc_bsu"/>
</dbReference>
<dbReference type="InterPro" id="IPR004531">
    <property type="entry name" value="Phe-tRNA-synth_IIc_bsu_arc_euk"/>
</dbReference>
<dbReference type="InterPro" id="IPR020825">
    <property type="entry name" value="Phe-tRNA_synthase-like_B3/B4"/>
</dbReference>
<dbReference type="InterPro" id="IPR022918">
    <property type="entry name" value="Phe_tRNA_ligase_beta2_arc"/>
</dbReference>
<dbReference type="InterPro" id="IPR041616">
    <property type="entry name" value="PheRS_beta_core"/>
</dbReference>
<dbReference type="InterPro" id="IPR040659">
    <property type="entry name" value="PhetRS_B1"/>
</dbReference>
<dbReference type="InterPro" id="IPR005147">
    <property type="entry name" value="tRNA_synthase_B5-dom"/>
</dbReference>
<dbReference type="NCBIfam" id="TIGR00471">
    <property type="entry name" value="pheT_arch"/>
    <property type="match status" value="1"/>
</dbReference>
<dbReference type="PANTHER" id="PTHR10947:SF0">
    <property type="entry name" value="PHENYLALANINE--TRNA LIGASE BETA SUBUNIT"/>
    <property type="match status" value="1"/>
</dbReference>
<dbReference type="PANTHER" id="PTHR10947">
    <property type="entry name" value="PHENYLALANYL-TRNA SYNTHETASE BETA CHAIN AND LEUCINE-RICH REPEAT-CONTAINING PROTEIN 47"/>
    <property type="match status" value="1"/>
</dbReference>
<dbReference type="Pfam" id="PF03483">
    <property type="entry name" value="B3_4"/>
    <property type="match status" value="1"/>
</dbReference>
<dbReference type="Pfam" id="PF03484">
    <property type="entry name" value="B5"/>
    <property type="match status" value="1"/>
</dbReference>
<dbReference type="Pfam" id="PF18262">
    <property type="entry name" value="PhetRS_B1"/>
    <property type="match status" value="1"/>
</dbReference>
<dbReference type="Pfam" id="PF17759">
    <property type="entry name" value="tRNA_synthFbeta"/>
    <property type="match status" value="1"/>
</dbReference>
<dbReference type="SMART" id="SM00873">
    <property type="entry name" value="B3_4"/>
    <property type="match status" value="1"/>
</dbReference>
<dbReference type="SMART" id="SM00874">
    <property type="entry name" value="B5"/>
    <property type="match status" value="1"/>
</dbReference>
<dbReference type="SUPFAM" id="SSF55681">
    <property type="entry name" value="Class II aaRS and biotin synthetases"/>
    <property type="match status" value="1"/>
</dbReference>
<dbReference type="SUPFAM" id="SSF56037">
    <property type="entry name" value="PheT/TilS domain"/>
    <property type="match status" value="1"/>
</dbReference>
<dbReference type="SUPFAM" id="SSF46955">
    <property type="entry name" value="Putative DNA-binding domain"/>
    <property type="match status" value="2"/>
</dbReference>
<dbReference type="PROSITE" id="PS51483">
    <property type="entry name" value="B5"/>
    <property type="match status" value="1"/>
</dbReference>
<sequence length="548" mass="62697">MPTINVKKADLERLVNMPLEDEFIEEKFPMMGVEVEGIFEEDGEKIIQFSINPNRPDYLSAEGLARGFRGIIGIETGLKKYDIESSDVKLYVENVETRPYIAMALVKGVIVDDYVLESIINLQEKLHWVMGRDRKKVAIGIHDADKVKPPFYYKEVSGDGIKFVPLNSDEEMTPREILEKHEKGIKYAHLIKDDKFPIILDSEGDVLSMPPIINGELTRVTTETRNLLIDVTGTDKYAVEKTLNIIVTALAERKYGKIHAVEVIKDNQSTIYPNLKEDVLETTSEYINKVLGANLTPGTIINYLRRCRLDAQFVDNKIKVFIPAYRVDIFGEIDIAEEVAIAYGYNKFSGEYPIIGTIGELNQLEKKCDFIREIMVGFGFYEVINLMLSNDEVLFKKMRIEDNNYIEVLKPASIEHRIVRKSILPLLMETLRINKHKELPQKIFEIGDCVVIDENAETKSRVVKKIAGVIVDNETNFNEIKSYVEGLLRELKIEYELDNFEHPSFIKGRCAKILKDGKIIGYFGEIHPEVITNFELEFPVVGFELEIE</sequence>
<comment type="catalytic activity">
    <reaction evidence="1">
        <text>tRNA(Phe) + L-phenylalanine + ATP = L-phenylalanyl-tRNA(Phe) + AMP + diphosphate + H(+)</text>
        <dbReference type="Rhea" id="RHEA:19413"/>
        <dbReference type="Rhea" id="RHEA-COMP:9668"/>
        <dbReference type="Rhea" id="RHEA-COMP:9699"/>
        <dbReference type="ChEBI" id="CHEBI:15378"/>
        <dbReference type="ChEBI" id="CHEBI:30616"/>
        <dbReference type="ChEBI" id="CHEBI:33019"/>
        <dbReference type="ChEBI" id="CHEBI:58095"/>
        <dbReference type="ChEBI" id="CHEBI:78442"/>
        <dbReference type="ChEBI" id="CHEBI:78531"/>
        <dbReference type="ChEBI" id="CHEBI:456215"/>
        <dbReference type="EC" id="6.1.1.20"/>
    </reaction>
</comment>
<comment type="cofactor">
    <cofactor evidence="1">
        <name>Mg(2+)</name>
        <dbReference type="ChEBI" id="CHEBI:18420"/>
    </cofactor>
</comment>
<comment type="subunit">
    <text evidence="1">Tetramer of two alpha and two beta subunits.</text>
</comment>
<comment type="subcellular location">
    <subcellularLocation>
        <location evidence="1">Cytoplasm</location>
    </subcellularLocation>
</comment>
<comment type="similarity">
    <text evidence="1 2">Belongs to the phenylalanyl-tRNA synthetase beta subunit family. Type 2 subfamily.</text>
</comment>
<accession>Q58508</accession>
<reference key="1">
    <citation type="journal article" date="1996" name="Science">
        <title>Complete genome sequence of the methanogenic archaeon, Methanococcus jannaschii.</title>
        <authorList>
            <person name="Bult C.J."/>
            <person name="White O."/>
            <person name="Olsen G.J."/>
            <person name="Zhou L."/>
            <person name="Fleischmann R.D."/>
            <person name="Sutton G.G."/>
            <person name="Blake J.A."/>
            <person name="FitzGerald L.M."/>
            <person name="Clayton R.A."/>
            <person name="Gocayne J.D."/>
            <person name="Kerlavage A.R."/>
            <person name="Dougherty B.A."/>
            <person name="Tomb J.-F."/>
            <person name="Adams M.D."/>
            <person name="Reich C.I."/>
            <person name="Overbeek R."/>
            <person name="Kirkness E.F."/>
            <person name="Weinstock K.G."/>
            <person name="Merrick J.M."/>
            <person name="Glodek A."/>
            <person name="Scott J.L."/>
            <person name="Geoghagen N.S.M."/>
            <person name="Weidman J.F."/>
            <person name="Fuhrmann J.L."/>
            <person name="Nguyen D."/>
            <person name="Utterback T.R."/>
            <person name="Kelley J.M."/>
            <person name="Peterson J.D."/>
            <person name="Sadow P.W."/>
            <person name="Hanna M.C."/>
            <person name="Cotton M.D."/>
            <person name="Roberts K.M."/>
            <person name="Hurst M.A."/>
            <person name="Kaine B.P."/>
            <person name="Borodovsky M."/>
            <person name="Klenk H.-P."/>
            <person name="Fraser C.M."/>
            <person name="Smith H.O."/>
            <person name="Woese C.R."/>
            <person name="Venter J.C."/>
        </authorList>
    </citation>
    <scope>NUCLEOTIDE SEQUENCE [LARGE SCALE GENOMIC DNA]</scope>
    <source>
        <strain>ATCC 43067 / DSM 2661 / JAL-1 / JCM 10045 / NBRC 100440</strain>
    </source>
</reference>
<proteinExistence type="inferred from homology"/>
<organism>
    <name type="scientific">Methanocaldococcus jannaschii (strain ATCC 43067 / DSM 2661 / JAL-1 / JCM 10045 / NBRC 100440)</name>
    <name type="common">Methanococcus jannaschii</name>
    <dbReference type="NCBI Taxonomy" id="243232"/>
    <lineage>
        <taxon>Archaea</taxon>
        <taxon>Methanobacteriati</taxon>
        <taxon>Methanobacteriota</taxon>
        <taxon>Methanomada group</taxon>
        <taxon>Methanococci</taxon>
        <taxon>Methanococcales</taxon>
        <taxon>Methanocaldococcaceae</taxon>
        <taxon>Methanocaldococcus</taxon>
    </lineage>
</organism>
<evidence type="ECO:0000255" key="1">
    <source>
        <dbReference type="HAMAP-Rule" id="MF_00284"/>
    </source>
</evidence>
<evidence type="ECO:0000305" key="2"/>
<feature type="chain" id="PRO_0000127002" description="Phenylalanine--tRNA ligase beta subunit">
    <location>
        <begin position="1"/>
        <end position="548"/>
    </location>
</feature>
<feature type="domain" description="B5" evidence="1">
    <location>
        <begin position="275"/>
        <end position="350"/>
    </location>
</feature>
<feature type="binding site" evidence="1">
    <location>
        <position position="328"/>
    </location>
    <ligand>
        <name>Mg(2+)</name>
        <dbReference type="ChEBI" id="CHEBI:18420"/>
        <note>shared with alpha subunit</note>
    </ligand>
</feature>
<feature type="binding site" evidence="1">
    <location>
        <position position="334"/>
    </location>
    <ligand>
        <name>Mg(2+)</name>
        <dbReference type="ChEBI" id="CHEBI:18420"/>
        <note>shared with alpha subunit</note>
    </ligand>
</feature>
<feature type="binding site" evidence="1">
    <location>
        <position position="337"/>
    </location>
    <ligand>
        <name>Mg(2+)</name>
        <dbReference type="ChEBI" id="CHEBI:18420"/>
        <note>shared with alpha subunit</note>
    </ligand>
</feature>
<feature type="binding site" evidence="1">
    <location>
        <position position="338"/>
    </location>
    <ligand>
        <name>Mg(2+)</name>
        <dbReference type="ChEBI" id="CHEBI:18420"/>
        <note>shared with alpha subunit</note>
    </ligand>
</feature>
<gene>
    <name evidence="1" type="primary">pheT</name>
    <name type="ordered locus">MJ1108</name>
</gene>
<protein>
    <recommendedName>
        <fullName evidence="1">Phenylalanine--tRNA ligase beta subunit</fullName>
        <ecNumber evidence="1">6.1.1.20</ecNumber>
    </recommendedName>
    <alternativeName>
        <fullName evidence="1">Phenylalanyl-tRNA synthetase beta subunit</fullName>
        <shortName evidence="1">PheRS</shortName>
    </alternativeName>
</protein>
<keyword id="KW-0030">Aminoacyl-tRNA synthetase</keyword>
<keyword id="KW-0067">ATP-binding</keyword>
<keyword id="KW-0963">Cytoplasm</keyword>
<keyword id="KW-0436">Ligase</keyword>
<keyword id="KW-0460">Magnesium</keyword>
<keyword id="KW-0479">Metal-binding</keyword>
<keyword id="KW-0547">Nucleotide-binding</keyword>
<keyword id="KW-0648">Protein biosynthesis</keyword>
<keyword id="KW-1185">Reference proteome</keyword>
<name>SYFB_METJA</name>